<name>AT1A1_RHIMB</name>
<dbReference type="EC" id="7.2.2.13"/>
<dbReference type="EMBL" id="Z11798">
    <property type="protein sequence ID" value="CAA77842.2"/>
    <property type="molecule type" value="mRNA"/>
</dbReference>
<dbReference type="PIR" id="A43451">
    <property type="entry name" value="S24650"/>
</dbReference>
<dbReference type="SMR" id="P30714"/>
<dbReference type="iPTMnet" id="P30714"/>
<dbReference type="GO" id="GO:0016020">
    <property type="term" value="C:membrane"/>
    <property type="evidence" value="ECO:0000250"/>
    <property type="project" value="UniProtKB"/>
</dbReference>
<dbReference type="GO" id="GO:0005886">
    <property type="term" value="C:plasma membrane"/>
    <property type="evidence" value="ECO:0000250"/>
    <property type="project" value="UniProtKB"/>
</dbReference>
<dbReference type="GO" id="GO:0042383">
    <property type="term" value="C:sarcolemma"/>
    <property type="evidence" value="ECO:0007669"/>
    <property type="project" value="UniProtKB-SubCell"/>
</dbReference>
<dbReference type="GO" id="GO:0005890">
    <property type="term" value="C:sodium:potassium-exchanging ATPase complex"/>
    <property type="evidence" value="ECO:0007669"/>
    <property type="project" value="TreeGrafter"/>
</dbReference>
<dbReference type="GO" id="GO:0005524">
    <property type="term" value="F:ATP binding"/>
    <property type="evidence" value="ECO:0007669"/>
    <property type="project" value="UniProtKB-KW"/>
</dbReference>
<dbReference type="GO" id="GO:0016887">
    <property type="term" value="F:ATP hydrolysis activity"/>
    <property type="evidence" value="ECO:0007669"/>
    <property type="project" value="InterPro"/>
</dbReference>
<dbReference type="GO" id="GO:0046872">
    <property type="term" value="F:metal ion binding"/>
    <property type="evidence" value="ECO:0007669"/>
    <property type="project" value="UniProtKB-KW"/>
</dbReference>
<dbReference type="GO" id="GO:0005391">
    <property type="term" value="F:P-type sodium:potassium-exchanging transporter activity"/>
    <property type="evidence" value="ECO:0007669"/>
    <property type="project" value="UniProtKB-EC"/>
</dbReference>
<dbReference type="GO" id="GO:0030007">
    <property type="term" value="P:intracellular potassium ion homeostasis"/>
    <property type="evidence" value="ECO:0007669"/>
    <property type="project" value="TreeGrafter"/>
</dbReference>
<dbReference type="GO" id="GO:0006883">
    <property type="term" value="P:intracellular sodium ion homeostasis"/>
    <property type="evidence" value="ECO:0007669"/>
    <property type="project" value="TreeGrafter"/>
</dbReference>
<dbReference type="GO" id="GO:1990573">
    <property type="term" value="P:potassium ion import across plasma membrane"/>
    <property type="evidence" value="ECO:0007669"/>
    <property type="project" value="TreeGrafter"/>
</dbReference>
<dbReference type="GO" id="GO:1902600">
    <property type="term" value="P:proton transmembrane transport"/>
    <property type="evidence" value="ECO:0007669"/>
    <property type="project" value="TreeGrafter"/>
</dbReference>
<dbReference type="GO" id="GO:0036376">
    <property type="term" value="P:sodium ion export across plasma membrane"/>
    <property type="evidence" value="ECO:0007669"/>
    <property type="project" value="TreeGrafter"/>
</dbReference>
<dbReference type="CDD" id="cd02608">
    <property type="entry name" value="P-type_ATPase_Na-K_like"/>
    <property type="match status" value="1"/>
</dbReference>
<dbReference type="FunFam" id="2.70.150.10:FF:000106">
    <property type="entry name" value="Sodium/potassium-transporting ATPase subunit alpha"/>
    <property type="match status" value="1"/>
</dbReference>
<dbReference type="FunFam" id="3.40.1110.10:FF:000001">
    <property type="entry name" value="Sodium/potassium-transporting ATPase subunit alpha"/>
    <property type="match status" value="1"/>
</dbReference>
<dbReference type="FunFam" id="3.40.50.1000:FF:000004">
    <property type="entry name" value="Sodium/potassium-transporting ATPase subunit alpha"/>
    <property type="match status" value="1"/>
</dbReference>
<dbReference type="FunFam" id="1.20.1110.10:FF:000095">
    <property type="entry name" value="Sodium/potassium-transporting ATPase subunit alpha-1"/>
    <property type="match status" value="2"/>
</dbReference>
<dbReference type="Gene3D" id="3.40.1110.10">
    <property type="entry name" value="Calcium-transporting ATPase, cytoplasmic domain N"/>
    <property type="match status" value="1"/>
</dbReference>
<dbReference type="Gene3D" id="2.70.150.10">
    <property type="entry name" value="Calcium-transporting ATPase, cytoplasmic transduction domain A"/>
    <property type="match status" value="1"/>
</dbReference>
<dbReference type="Gene3D" id="1.20.1110.10">
    <property type="entry name" value="Calcium-transporting ATPase, transmembrane domain"/>
    <property type="match status" value="1"/>
</dbReference>
<dbReference type="Gene3D" id="3.40.50.1000">
    <property type="entry name" value="HAD superfamily/HAD-like"/>
    <property type="match status" value="1"/>
</dbReference>
<dbReference type="InterPro" id="IPR006068">
    <property type="entry name" value="ATPase_P-typ_cation-transptr_C"/>
</dbReference>
<dbReference type="InterPro" id="IPR004014">
    <property type="entry name" value="ATPase_P-typ_cation-transptr_N"/>
</dbReference>
<dbReference type="InterPro" id="IPR023299">
    <property type="entry name" value="ATPase_P-typ_cyto_dom_N"/>
</dbReference>
<dbReference type="InterPro" id="IPR018303">
    <property type="entry name" value="ATPase_P-typ_P_site"/>
</dbReference>
<dbReference type="InterPro" id="IPR023298">
    <property type="entry name" value="ATPase_P-typ_TM_dom_sf"/>
</dbReference>
<dbReference type="InterPro" id="IPR008250">
    <property type="entry name" value="ATPase_P-typ_transduc_dom_A_sf"/>
</dbReference>
<dbReference type="InterPro" id="IPR050510">
    <property type="entry name" value="Cation_transp_ATPase_P-type"/>
</dbReference>
<dbReference type="InterPro" id="IPR036412">
    <property type="entry name" value="HAD-like_sf"/>
</dbReference>
<dbReference type="InterPro" id="IPR023214">
    <property type="entry name" value="HAD_sf"/>
</dbReference>
<dbReference type="InterPro" id="IPR005775">
    <property type="entry name" value="P-type_ATPase_IIC"/>
</dbReference>
<dbReference type="InterPro" id="IPR001757">
    <property type="entry name" value="P_typ_ATPase"/>
</dbReference>
<dbReference type="InterPro" id="IPR044492">
    <property type="entry name" value="P_typ_ATPase_HD_dom"/>
</dbReference>
<dbReference type="NCBIfam" id="TIGR01106">
    <property type="entry name" value="ATPase-IIC_X-K"/>
    <property type="match status" value="1"/>
</dbReference>
<dbReference type="NCBIfam" id="TIGR01494">
    <property type="entry name" value="ATPase_P-type"/>
    <property type="match status" value="2"/>
</dbReference>
<dbReference type="PANTHER" id="PTHR43294">
    <property type="entry name" value="SODIUM/POTASSIUM-TRANSPORTING ATPASE SUBUNIT ALPHA"/>
    <property type="match status" value="1"/>
</dbReference>
<dbReference type="PANTHER" id="PTHR43294:SF9">
    <property type="entry name" value="SODIUM_POTASSIUM-TRANSPORTING ATPASE SUBUNIT ALPHA-1"/>
    <property type="match status" value="1"/>
</dbReference>
<dbReference type="Pfam" id="PF13246">
    <property type="entry name" value="Cation_ATPase"/>
    <property type="match status" value="1"/>
</dbReference>
<dbReference type="Pfam" id="PF00689">
    <property type="entry name" value="Cation_ATPase_C"/>
    <property type="match status" value="1"/>
</dbReference>
<dbReference type="Pfam" id="PF00690">
    <property type="entry name" value="Cation_ATPase_N"/>
    <property type="match status" value="1"/>
</dbReference>
<dbReference type="Pfam" id="PF00122">
    <property type="entry name" value="E1-E2_ATPase"/>
    <property type="match status" value="1"/>
</dbReference>
<dbReference type="PRINTS" id="PR00119">
    <property type="entry name" value="CATATPASE"/>
</dbReference>
<dbReference type="PRINTS" id="PR00121">
    <property type="entry name" value="NAKATPASE"/>
</dbReference>
<dbReference type="SFLD" id="SFLDS00003">
    <property type="entry name" value="Haloacid_Dehalogenase"/>
    <property type="match status" value="1"/>
</dbReference>
<dbReference type="SFLD" id="SFLDF00027">
    <property type="entry name" value="p-type_atpase"/>
    <property type="match status" value="1"/>
</dbReference>
<dbReference type="SMART" id="SM00831">
    <property type="entry name" value="Cation_ATPase_N"/>
    <property type="match status" value="1"/>
</dbReference>
<dbReference type="SUPFAM" id="SSF81653">
    <property type="entry name" value="Calcium ATPase, transduction domain A"/>
    <property type="match status" value="1"/>
</dbReference>
<dbReference type="SUPFAM" id="SSF81665">
    <property type="entry name" value="Calcium ATPase, transmembrane domain M"/>
    <property type="match status" value="1"/>
</dbReference>
<dbReference type="SUPFAM" id="SSF56784">
    <property type="entry name" value="HAD-like"/>
    <property type="match status" value="1"/>
</dbReference>
<dbReference type="SUPFAM" id="SSF81660">
    <property type="entry name" value="Metal cation-transporting ATPase, ATP-binding domain N"/>
    <property type="match status" value="1"/>
</dbReference>
<dbReference type="PROSITE" id="PS00154">
    <property type="entry name" value="ATPASE_E1_E2"/>
    <property type="match status" value="1"/>
</dbReference>
<proteinExistence type="evidence at protein level"/>
<protein>
    <recommendedName>
        <fullName>Sodium/potassium-transporting ATPase subunit alpha-1</fullName>
        <shortName>Na(+)/K(+) ATPase alpha-1 subunit</shortName>
        <ecNumber>7.2.2.13</ecNumber>
    </recommendedName>
    <alternativeName>
        <fullName>Sodium pump subunit alpha-1</fullName>
    </alternativeName>
</protein>
<keyword id="KW-0067">ATP-binding</keyword>
<keyword id="KW-1003">Cell membrane</keyword>
<keyword id="KW-0406">Ion transport</keyword>
<keyword id="KW-0460">Magnesium</keyword>
<keyword id="KW-0472">Membrane</keyword>
<keyword id="KW-0479">Metal-binding</keyword>
<keyword id="KW-0547">Nucleotide-binding</keyword>
<keyword id="KW-0597">Phosphoprotein</keyword>
<keyword id="KW-0630">Potassium</keyword>
<keyword id="KW-0633">Potassium transport</keyword>
<keyword id="KW-0915">Sodium</keyword>
<keyword id="KW-0739">Sodium transport</keyword>
<keyword id="KW-0740">Sodium/potassium transport</keyword>
<keyword id="KW-1278">Translocase</keyword>
<keyword id="KW-0812">Transmembrane</keyword>
<keyword id="KW-1133">Transmembrane helix</keyword>
<keyword id="KW-0813">Transport</keyword>
<organism>
    <name type="scientific">Rhinella marina</name>
    <name type="common">Cane toad</name>
    <name type="synonym">Bufo marinus</name>
    <dbReference type="NCBI Taxonomy" id="8386"/>
    <lineage>
        <taxon>Eukaryota</taxon>
        <taxon>Metazoa</taxon>
        <taxon>Chordata</taxon>
        <taxon>Craniata</taxon>
        <taxon>Vertebrata</taxon>
        <taxon>Euteleostomi</taxon>
        <taxon>Amphibia</taxon>
        <taxon>Batrachia</taxon>
        <taxon>Anura</taxon>
        <taxon>Neobatrachia</taxon>
        <taxon>Hyloidea</taxon>
        <taxon>Bufonidae</taxon>
        <taxon>Rhinella</taxon>
    </lineage>
</organism>
<sequence length="1023" mass="112617">MGYGAGRDKYEPAATSEHGGKKGKGKGKDRDMEELKKEVTMEDHKMTLEELHRKYGTDLTRGLTTARAAEILARDGPNALTPPPTTPEWVKFCRQLFGGFSMLLWIGAILCFLAYGIRKASDLEPDNDNLYLGVVLSAVVIITGCFSYYQEAKSSRIMESFKNMVPQQALVIRNGEKLSINAENVVQGDLVEVKGGDRIPADLRIISAHGCKVDNSSLTGESEPQTRSPDFTNENPLETRNIAFFSTNCVEGTARGIVINTGDRTVMGRIATLASGLEGGQTPIAVEIGHFIHIITGVAVFLGVSFFILSLILHYTWLEAVIFLIGIIVANVPEGLLATVTVCLTLTAKRMARKNCLVKNLEAVETLGSTSTICSDKTGTLTQNRMTVAHMWFDNQIHEADTTENQSGASFDKSSPTWTALARIAGLCNRAVFPAGQENTPILKRDVVGDASESALLKCIELCCGSVKDMREKNQKVAEIPFNSTNKYQLSVHKNANPSESRYLLVMKGAPERILDRCSSILLQGKEQPLDEELKDAFQNAYLELGGLGERVLGFCHLLLDDEQFPDGFSFDTEDVNFPTEGLCFVGLISMIDPPRAAVPDRVGKCRSAGIKVIMVTGDHPITAKAIAKGVGIISEGNETVEDIAARLNIPVNQVNPRDAKACVIHGTDLKDMNADQIDDILRHHTEIVFARTSPQQKLIIVEGCQRQGAIVAVTGDGVNDSPALKKADIGIAMGIAGSDVSKQAADMILLDDNFASIVTGVEEGRLIFDNLKKSIAYTLTSNIPEITPFLIFIIADIPLPLGTVTILCIDLGTDMVPAISLAYEQAESDIMKRQPRNPKKDKLVNERLISMAYGQIGMIQALGGFFAYFVILAENGFLPSTLLGIRVAWEDRYVNDVEDSYGQQWTYEQRKIVEFTCHTAFFVSIVVVQWADLIICKTRRNSVFQQGMKNKILIFGLFEETALAAFLSYCPGMDVALRMYPLKPTWWFCAFPYSLLIFIYDEVRKLILRRSPGGWVEKETYY</sequence>
<evidence type="ECO:0000250" key="1"/>
<evidence type="ECO:0000250" key="2">
    <source>
        <dbReference type="UniProtKB" id="P05023"/>
    </source>
</evidence>
<evidence type="ECO:0000255" key="3"/>
<evidence type="ECO:0000256" key="4">
    <source>
        <dbReference type="SAM" id="MobiDB-lite"/>
    </source>
</evidence>
<evidence type="ECO:0000269" key="5">
    <source>
    </source>
</evidence>
<evidence type="ECO:0000305" key="6"/>
<accession>P30714</accession>
<gene>
    <name type="primary">ATP1A1</name>
</gene>
<comment type="function">
    <text evidence="2">This is the catalytic component of the active enzyme, which catalyzes the hydrolysis of ATP coupled with the exchange of sodium and potassium ions across the plasma membrane. This action creates the electrochemical gradient of sodium and potassium ions, providing the energy for active transport of various nutrients.</text>
</comment>
<comment type="catalytic activity">
    <reaction>
        <text>K(+)(out) + Na(+)(in) + ATP + H2O = K(+)(in) + Na(+)(out) + ADP + phosphate + H(+)</text>
        <dbReference type="Rhea" id="RHEA:18353"/>
        <dbReference type="ChEBI" id="CHEBI:15377"/>
        <dbReference type="ChEBI" id="CHEBI:15378"/>
        <dbReference type="ChEBI" id="CHEBI:29101"/>
        <dbReference type="ChEBI" id="CHEBI:29103"/>
        <dbReference type="ChEBI" id="CHEBI:30616"/>
        <dbReference type="ChEBI" id="CHEBI:43474"/>
        <dbReference type="ChEBI" id="CHEBI:456216"/>
        <dbReference type="EC" id="7.2.2.13"/>
    </reaction>
</comment>
<comment type="activity regulation">
    <text>This alpha subunit is resistant to ouabain.</text>
</comment>
<comment type="subunit">
    <text evidence="6">The sodium/potassium-transporting ATPase is composed of a catalytic alpha subunit, an auxiliary non-catalytic beta subunit and an additional regulatory subunit.</text>
</comment>
<comment type="subcellular location">
    <subcellularLocation>
        <location evidence="2">Cell membrane</location>
        <location evidence="2">Sarcolemma</location>
        <topology evidence="3">Multi-pass membrane protein</topology>
    </subcellularLocation>
</comment>
<comment type="tissue specificity">
    <text>Mainly expressed in kidney. Found in bladder, colon, eye, and testis. Found in low levels in brain, heart, spleen and liver.</text>
</comment>
<comment type="similarity">
    <text evidence="6">Belongs to the cation transport ATPase (P-type) (TC 3.A.3) family. Type IIC subfamily.</text>
</comment>
<feature type="propeptide" id="PRO_0000002501" evidence="1">
    <location>
        <begin position="1"/>
        <end position="5"/>
    </location>
</feature>
<feature type="chain" id="PRO_0000002502" description="Sodium/potassium-transporting ATPase subunit alpha-1">
    <location>
        <begin position="6"/>
        <end position="1023"/>
    </location>
</feature>
<feature type="topological domain" description="Cytoplasmic" evidence="3">
    <location>
        <begin position="6"/>
        <end position="87"/>
    </location>
</feature>
<feature type="transmembrane region" description="Helical" evidence="3">
    <location>
        <begin position="88"/>
        <end position="108"/>
    </location>
</feature>
<feature type="topological domain" description="Extracellular" evidence="3">
    <location>
        <begin position="109"/>
        <end position="131"/>
    </location>
</feature>
<feature type="transmembrane region" description="Helical" evidence="3">
    <location>
        <begin position="132"/>
        <end position="152"/>
    </location>
</feature>
<feature type="topological domain" description="Cytoplasmic" evidence="3">
    <location>
        <begin position="153"/>
        <end position="288"/>
    </location>
</feature>
<feature type="transmembrane region" description="Helical" evidence="3">
    <location>
        <begin position="289"/>
        <end position="308"/>
    </location>
</feature>
<feature type="topological domain" description="Extracellular" evidence="3">
    <location>
        <begin position="309"/>
        <end position="320"/>
    </location>
</feature>
<feature type="transmembrane region" description="Helical" evidence="3">
    <location>
        <begin position="321"/>
        <end position="338"/>
    </location>
</feature>
<feature type="topological domain" description="Cytoplasmic" evidence="3">
    <location>
        <begin position="339"/>
        <end position="772"/>
    </location>
</feature>
<feature type="transmembrane region" description="Helical" evidence="3">
    <location>
        <begin position="773"/>
        <end position="792"/>
    </location>
</feature>
<feature type="topological domain" description="Extracellular" evidence="3">
    <location>
        <begin position="793"/>
        <end position="802"/>
    </location>
</feature>
<feature type="transmembrane region" description="Helical" evidence="3">
    <location>
        <begin position="803"/>
        <end position="823"/>
    </location>
</feature>
<feature type="topological domain" description="Cytoplasmic" evidence="3">
    <location>
        <begin position="824"/>
        <end position="843"/>
    </location>
</feature>
<feature type="transmembrane region" description="Helical" evidence="3">
    <location>
        <begin position="844"/>
        <end position="866"/>
    </location>
</feature>
<feature type="topological domain" description="Extracellular" evidence="3">
    <location>
        <begin position="867"/>
        <end position="918"/>
    </location>
</feature>
<feature type="transmembrane region" description="Helical" evidence="3">
    <location>
        <begin position="919"/>
        <end position="938"/>
    </location>
</feature>
<feature type="topological domain" description="Cytoplasmic" evidence="3">
    <location>
        <begin position="939"/>
        <end position="951"/>
    </location>
</feature>
<feature type="transmembrane region" description="Helical" evidence="3">
    <location>
        <begin position="952"/>
        <end position="970"/>
    </location>
</feature>
<feature type="topological domain" description="Extracellular" evidence="3">
    <location>
        <begin position="971"/>
        <end position="985"/>
    </location>
</feature>
<feature type="transmembrane region" description="Helical" evidence="3">
    <location>
        <begin position="986"/>
        <end position="1006"/>
    </location>
</feature>
<feature type="topological domain" description="Cytoplasmic" evidence="3">
    <location>
        <begin position="1007"/>
        <end position="1023"/>
    </location>
</feature>
<feature type="region of interest" description="Disordered" evidence="4">
    <location>
        <begin position="1"/>
        <end position="34"/>
    </location>
</feature>
<feature type="region of interest" description="Interaction with phosphoinositide-3 kinase" evidence="1">
    <location>
        <begin position="82"/>
        <end position="84"/>
    </location>
</feature>
<feature type="region of interest" description="Disordered" evidence="4">
    <location>
        <begin position="215"/>
        <end position="235"/>
    </location>
</feature>
<feature type="compositionally biased region" description="Basic and acidic residues" evidence="4">
    <location>
        <begin position="1"/>
        <end position="11"/>
    </location>
</feature>
<feature type="active site" description="4-aspartylphosphate intermediate" evidence="1">
    <location>
        <position position="376"/>
    </location>
</feature>
<feature type="binding site" evidence="1">
    <location>
        <position position="487"/>
    </location>
    <ligand>
        <name>ATP</name>
        <dbReference type="ChEBI" id="CHEBI:30616"/>
    </ligand>
</feature>
<feature type="binding site" evidence="1">
    <location>
        <position position="717"/>
    </location>
    <ligand>
        <name>Mg(2+)</name>
        <dbReference type="ChEBI" id="CHEBI:18420"/>
    </ligand>
</feature>
<feature type="binding site" evidence="1">
    <location>
        <position position="721"/>
    </location>
    <ligand>
        <name>Mg(2+)</name>
        <dbReference type="ChEBI" id="CHEBI:18420"/>
    </ligand>
</feature>
<feature type="modified residue" description="Phosphothreonine; by PKC" evidence="5">
    <location>
        <position position="15"/>
    </location>
</feature>
<feature type="modified residue" description="Phosphoserine; by PKC" evidence="5">
    <location>
        <position position="16"/>
    </location>
</feature>
<feature type="modified residue" description="Phosphoserine; by PKA" evidence="5">
    <location>
        <position position="943"/>
    </location>
</feature>
<reference key="1">
    <citation type="journal article" date="1992" name="J. Biol. Chem.">
        <title>Primary sequence and functional expression of a novel ouabain-resistant Na,K-ATPase. The beta subunit modulates potassium activation of the Na,K-pump.</title>
        <authorList>
            <person name="Jaisser F."/>
            <person name="Canessa C.M."/>
            <person name="Horisberger J.-D."/>
            <person name="Rossier B.C."/>
        </authorList>
    </citation>
    <scope>NUCLEOTIDE SEQUENCE [MRNA]</scope>
    <source>
        <tissue>Urinary bladder urothelium</tissue>
    </source>
</reference>
<reference key="2">
    <citation type="submission" date="2002-12" db="EMBL/GenBank/DDBJ databases">
        <authorList>
            <person name="Jaisser F."/>
        </authorList>
    </citation>
    <scope>SEQUENCE REVISION TO 835-836</scope>
</reference>
<reference key="3">
    <citation type="journal article" date="1994" name="J. Biol. Chem.">
        <title>Phosphorylation of the Na,K-ATPase alpha-subunit by protein kinase A and C in vitro and in intact cells. Identification of a novel motif for PKC-mediated phosphorylation.</title>
        <authorList>
            <person name="Beguin P."/>
            <person name="Beggah A.T."/>
            <person name="Chibalin A.V."/>
            <person name="Burgener-Kairuz P."/>
            <person name="Jaisser F."/>
            <person name="Mathews P.M."/>
            <person name="Rossier B.C."/>
            <person name="Cotecchia S."/>
            <person name="Geering K."/>
        </authorList>
    </citation>
    <scope>PHOSPHORYLATION AT THR-15 AND SER-16 BY PROTEIN KINASE C</scope>
    <scope>PHOSPHORYLATION AT SER-943 BY CAMP-DEPENDENT KINASE</scope>
</reference>